<comment type="function">
    <text evidence="1">Binds the lower part of the 30S subunit head. Binds mRNA in the 70S ribosome, positioning it for translation.</text>
</comment>
<comment type="subunit">
    <text evidence="1">Part of the 30S ribosomal subunit. Forms a tight complex with proteins S10 and S14.</text>
</comment>
<comment type="similarity">
    <text evidence="1">Belongs to the universal ribosomal protein uS3 family.</text>
</comment>
<sequence length="250" mass="28455">MGQKSNPNGLRLGIIRTWESKWYDVDKKVPFLVGEDFKIRTLIKNHYPKSTISQIEIKRLKKSNDEFIEIDLYTSKIGIIQGPENKNKNSLINKIEKLINKKIQINIFEVKAFNKIAILVAQNIAMQLQQRAFYKAVLKSAIQKALKSGIKGIKIIITGRLGGAEKARRNSISMGIVPLNTLRADIDYAFEEAHTTYGVLGVKVIINHGEVLPNKTIADTRQIFSSQYENKKNNNKRHFVNKKNFKTSTS</sequence>
<organism>
    <name type="scientific">Elm yellows phytoplasma</name>
    <dbReference type="NCBI Taxonomy" id="35774"/>
    <lineage>
        <taxon>Bacteria</taxon>
        <taxon>Bacillati</taxon>
        <taxon>Mycoplasmatota</taxon>
        <taxon>Mollicutes</taxon>
        <taxon>Acholeplasmatales</taxon>
        <taxon>Acholeplasmataceae</taxon>
        <taxon>Candidatus Phytoplasma</taxon>
        <taxon>16SrV (Elm yellows group)</taxon>
    </lineage>
</organism>
<gene>
    <name evidence="1" type="primary">rpsC</name>
    <name evidence="1" type="synonym">rps3</name>
</gene>
<name>RS3_ELYEP</name>
<proteinExistence type="inferred from homology"/>
<dbReference type="EMBL" id="AF396938">
    <property type="protein sequence ID" value="AAL57326.1"/>
    <property type="molecule type" value="Genomic_DNA"/>
</dbReference>
<dbReference type="SMR" id="P0A4C2"/>
<dbReference type="GO" id="GO:0022627">
    <property type="term" value="C:cytosolic small ribosomal subunit"/>
    <property type="evidence" value="ECO:0007669"/>
    <property type="project" value="TreeGrafter"/>
</dbReference>
<dbReference type="GO" id="GO:0003729">
    <property type="term" value="F:mRNA binding"/>
    <property type="evidence" value="ECO:0007669"/>
    <property type="project" value="UniProtKB-UniRule"/>
</dbReference>
<dbReference type="GO" id="GO:0019843">
    <property type="term" value="F:rRNA binding"/>
    <property type="evidence" value="ECO:0007669"/>
    <property type="project" value="UniProtKB-UniRule"/>
</dbReference>
<dbReference type="GO" id="GO:0003735">
    <property type="term" value="F:structural constituent of ribosome"/>
    <property type="evidence" value="ECO:0007669"/>
    <property type="project" value="InterPro"/>
</dbReference>
<dbReference type="GO" id="GO:0006412">
    <property type="term" value="P:translation"/>
    <property type="evidence" value="ECO:0007669"/>
    <property type="project" value="UniProtKB-UniRule"/>
</dbReference>
<dbReference type="CDD" id="cd02412">
    <property type="entry name" value="KH-II_30S_S3"/>
    <property type="match status" value="1"/>
</dbReference>
<dbReference type="Gene3D" id="3.30.300.20">
    <property type="match status" value="1"/>
</dbReference>
<dbReference type="Gene3D" id="3.30.1140.32">
    <property type="entry name" value="Ribosomal protein S3, C-terminal domain"/>
    <property type="match status" value="1"/>
</dbReference>
<dbReference type="HAMAP" id="MF_01309_B">
    <property type="entry name" value="Ribosomal_uS3_B"/>
    <property type="match status" value="1"/>
</dbReference>
<dbReference type="InterPro" id="IPR015946">
    <property type="entry name" value="KH_dom-like_a/b"/>
</dbReference>
<dbReference type="InterPro" id="IPR004044">
    <property type="entry name" value="KH_dom_type_2"/>
</dbReference>
<dbReference type="InterPro" id="IPR009019">
    <property type="entry name" value="KH_sf_prok-type"/>
</dbReference>
<dbReference type="InterPro" id="IPR036419">
    <property type="entry name" value="Ribosomal_S3_C_sf"/>
</dbReference>
<dbReference type="InterPro" id="IPR005704">
    <property type="entry name" value="Ribosomal_uS3_bac-typ"/>
</dbReference>
<dbReference type="InterPro" id="IPR001351">
    <property type="entry name" value="Ribosomal_uS3_C"/>
</dbReference>
<dbReference type="InterPro" id="IPR018280">
    <property type="entry name" value="Ribosomal_uS3_CS"/>
</dbReference>
<dbReference type="NCBIfam" id="TIGR01009">
    <property type="entry name" value="rpsC_bact"/>
    <property type="match status" value="1"/>
</dbReference>
<dbReference type="PANTHER" id="PTHR11760">
    <property type="entry name" value="30S/40S RIBOSOMAL PROTEIN S3"/>
    <property type="match status" value="1"/>
</dbReference>
<dbReference type="PANTHER" id="PTHR11760:SF19">
    <property type="entry name" value="SMALL RIBOSOMAL SUBUNIT PROTEIN US3C"/>
    <property type="match status" value="1"/>
</dbReference>
<dbReference type="Pfam" id="PF00189">
    <property type="entry name" value="Ribosomal_S3_C"/>
    <property type="match status" value="1"/>
</dbReference>
<dbReference type="SUPFAM" id="SSF54814">
    <property type="entry name" value="Prokaryotic type KH domain (KH-domain type II)"/>
    <property type="match status" value="1"/>
</dbReference>
<dbReference type="SUPFAM" id="SSF54821">
    <property type="entry name" value="Ribosomal protein S3 C-terminal domain"/>
    <property type="match status" value="1"/>
</dbReference>
<dbReference type="PROSITE" id="PS50823">
    <property type="entry name" value="KH_TYPE_2"/>
    <property type="match status" value="1"/>
</dbReference>
<dbReference type="PROSITE" id="PS00548">
    <property type="entry name" value="RIBOSOMAL_S3"/>
    <property type="match status" value="1"/>
</dbReference>
<evidence type="ECO:0000255" key="1">
    <source>
        <dbReference type="HAMAP-Rule" id="MF_01309"/>
    </source>
</evidence>
<evidence type="ECO:0000305" key="2"/>
<protein>
    <recommendedName>
        <fullName evidence="1">Small ribosomal subunit protein uS3</fullName>
    </recommendedName>
    <alternativeName>
        <fullName evidence="2">30S ribosomal protein S3</fullName>
    </alternativeName>
</protein>
<accession>P0A4C2</accession>
<accession>Q8VLE1</accession>
<keyword id="KW-0687">Ribonucleoprotein</keyword>
<keyword id="KW-0689">Ribosomal protein</keyword>
<keyword id="KW-0694">RNA-binding</keyword>
<keyword id="KW-0699">rRNA-binding</keyword>
<reference key="1">
    <citation type="journal article" date="2002" name="Mol. Cell. Probes">
        <title>Genetic variability among flavescence doree phytoplasmas from different origins in Italy and France.</title>
        <authorList>
            <person name="Martini M."/>
            <person name="Botti S."/>
            <person name="Marcone C."/>
            <person name="Marzachi C."/>
            <person name="Casati P."/>
            <person name="Bianco P.A."/>
            <person name="Benedetti R."/>
            <person name="Bertaccini A."/>
        </authorList>
    </citation>
    <scope>NUCLEOTIDE SEQUENCE [GENOMIC DNA]</scope>
    <source>
        <strain>EY1</strain>
    </source>
</reference>
<feature type="chain" id="PRO_0000130117" description="Small ribosomal subunit protein uS3">
    <location>
        <begin position="1"/>
        <end position="250"/>
    </location>
</feature>
<feature type="domain" description="KH type-2" evidence="1">
    <location>
        <begin position="39"/>
        <end position="111"/>
    </location>
</feature>